<dbReference type="EMBL" id="AM167904">
    <property type="protein sequence ID" value="CAJ49701.1"/>
    <property type="molecule type" value="Genomic_DNA"/>
</dbReference>
<dbReference type="RefSeq" id="WP_012417757.1">
    <property type="nucleotide sequence ID" value="NC_010645.1"/>
</dbReference>
<dbReference type="SMR" id="Q2KZI1"/>
<dbReference type="STRING" id="360910.BAV2091"/>
<dbReference type="GeneID" id="92934849"/>
<dbReference type="KEGG" id="bav:BAV2091"/>
<dbReference type="eggNOG" id="COG2127">
    <property type="taxonomic scope" value="Bacteria"/>
</dbReference>
<dbReference type="HOGENOM" id="CLU_134358_2_1_4"/>
<dbReference type="OrthoDB" id="9796121at2"/>
<dbReference type="Proteomes" id="UP000001977">
    <property type="component" value="Chromosome"/>
</dbReference>
<dbReference type="GO" id="GO:0030163">
    <property type="term" value="P:protein catabolic process"/>
    <property type="evidence" value="ECO:0007669"/>
    <property type="project" value="InterPro"/>
</dbReference>
<dbReference type="GO" id="GO:0006508">
    <property type="term" value="P:proteolysis"/>
    <property type="evidence" value="ECO:0007669"/>
    <property type="project" value="UniProtKB-UniRule"/>
</dbReference>
<dbReference type="FunFam" id="3.30.1390.10:FF:000002">
    <property type="entry name" value="ATP-dependent Clp protease adapter protein ClpS"/>
    <property type="match status" value="1"/>
</dbReference>
<dbReference type="Gene3D" id="3.30.1390.10">
    <property type="match status" value="1"/>
</dbReference>
<dbReference type="HAMAP" id="MF_00302">
    <property type="entry name" value="ClpS"/>
    <property type="match status" value="1"/>
</dbReference>
<dbReference type="InterPro" id="IPR022935">
    <property type="entry name" value="ClpS"/>
</dbReference>
<dbReference type="InterPro" id="IPR003769">
    <property type="entry name" value="ClpS_core"/>
</dbReference>
<dbReference type="InterPro" id="IPR014719">
    <property type="entry name" value="Ribosomal_bL12_C/ClpS-like"/>
</dbReference>
<dbReference type="NCBIfam" id="NF000672">
    <property type="entry name" value="PRK00033.1-5"/>
    <property type="match status" value="1"/>
</dbReference>
<dbReference type="PANTHER" id="PTHR33473:SF19">
    <property type="entry name" value="ATP-DEPENDENT CLP PROTEASE ADAPTER PROTEIN CLPS"/>
    <property type="match status" value="1"/>
</dbReference>
<dbReference type="PANTHER" id="PTHR33473">
    <property type="entry name" value="ATP-DEPENDENT CLP PROTEASE ADAPTER PROTEIN CLPS1, CHLOROPLASTIC"/>
    <property type="match status" value="1"/>
</dbReference>
<dbReference type="Pfam" id="PF02617">
    <property type="entry name" value="ClpS"/>
    <property type="match status" value="1"/>
</dbReference>
<dbReference type="SUPFAM" id="SSF54736">
    <property type="entry name" value="ClpS-like"/>
    <property type="match status" value="1"/>
</dbReference>
<gene>
    <name evidence="1" type="primary">clpS</name>
    <name type="ordered locus">BAV2091</name>
</gene>
<comment type="function">
    <text evidence="1">Involved in the modulation of the specificity of the ClpAP-mediated ATP-dependent protein degradation.</text>
</comment>
<comment type="subunit">
    <text evidence="1">Binds to the N-terminal domain of the chaperone ClpA.</text>
</comment>
<comment type="similarity">
    <text evidence="1">Belongs to the ClpS family.</text>
</comment>
<accession>Q2KZI1</accession>
<organism>
    <name type="scientific">Bordetella avium (strain 197N)</name>
    <dbReference type="NCBI Taxonomy" id="360910"/>
    <lineage>
        <taxon>Bacteria</taxon>
        <taxon>Pseudomonadati</taxon>
        <taxon>Pseudomonadota</taxon>
        <taxon>Betaproteobacteria</taxon>
        <taxon>Burkholderiales</taxon>
        <taxon>Alcaligenaceae</taxon>
        <taxon>Bordetella</taxon>
    </lineage>
</organism>
<feature type="chain" id="PRO_1000022591" description="ATP-dependent Clp protease adapter protein ClpS">
    <location>
        <begin position="1"/>
        <end position="104"/>
    </location>
</feature>
<keyword id="KW-1185">Reference proteome</keyword>
<protein>
    <recommendedName>
        <fullName evidence="1">ATP-dependent Clp protease adapter protein ClpS</fullName>
    </recommendedName>
</protein>
<sequence>MSSTLDSQHDLVAEKQSARTAPPPMYQVVLLNDDYTPMEFVVKVLQKFFGKNQEEATRIMLQVHHEGRGICGVYVRDVAATRIAQVAQYARARQHPLQCIMEPV</sequence>
<name>CLPS_BORA1</name>
<proteinExistence type="inferred from homology"/>
<reference key="1">
    <citation type="journal article" date="2006" name="J. Bacteriol.">
        <title>Comparison of the genome sequence of the poultry pathogen Bordetella avium with those of B. bronchiseptica, B. pertussis, and B. parapertussis reveals extensive diversity in surface structures associated with host interaction.</title>
        <authorList>
            <person name="Sebaihia M."/>
            <person name="Preston A."/>
            <person name="Maskell D.J."/>
            <person name="Kuzmiak H."/>
            <person name="Connell T.D."/>
            <person name="King N.D."/>
            <person name="Orndorff P.E."/>
            <person name="Miyamoto D.M."/>
            <person name="Thomson N.R."/>
            <person name="Harris D."/>
            <person name="Goble A."/>
            <person name="Lord A."/>
            <person name="Murphy L."/>
            <person name="Quail M.A."/>
            <person name="Rutter S."/>
            <person name="Squares R."/>
            <person name="Squares S."/>
            <person name="Woodward J."/>
            <person name="Parkhill J."/>
            <person name="Temple L.M."/>
        </authorList>
    </citation>
    <scope>NUCLEOTIDE SEQUENCE [LARGE SCALE GENOMIC DNA]</scope>
    <source>
        <strain>197N</strain>
    </source>
</reference>
<evidence type="ECO:0000255" key="1">
    <source>
        <dbReference type="HAMAP-Rule" id="MF_00302"/>
    </source>
</evidence>